<organism>
    <name type="scientific">Salmonella agona (strain SL483)</name>
    <dbReference type="NCBI Taxonomy" id="454166"/>
    <lineage>
        <taxon>Bacteria</taxon>
        <taxon>Pseudomonadati</taxon>
        <taxon>Pseudomonadota</taxon>
        <taxon>Gammaproteobacteria</taxon>
        <taxon>Enterobacterales</taxon>
        <taxon>Enterobacteriaceae</taxon>
        <taxon>Salmonella</taxon>
    </lineage>
</organism>
<reference key="1">
    <citation type="journal article" date="2011" name="J. Bacteriol.">
        <title>Comparative genomics of 28 Salmonella enterica isolates: evidence for CRISPR-mediated adaptive sublineage evolution.</title>
        <authorList>
            <person name="Fricke W.F."/>
            <person name="Mammel M.K."/>
            <person name="McDermott P.F."/>
            <person name="Tartera C."/>
            <person name="White D.G."/>
            <person name="Leclerc J.E."/>
            <person name="Ravel J."/>
            <person name="Cebula T.A."/>
        </authorList>
    </citation>
    <scope>NUCLEOTIDE SEQUENCE [LARGE SCALE GENOMIC DNA]</scope>
    <source>
        <strain>SL483</strain>
    </source>
</reference>
<evidence type="ECO:0000255" key="1">
    <source>
        <dbReference type="HAMAP-Rule" id="MF_01667"/>
    </source>
</evidence>
<feature type="chain" id="PRO_1000187294" description="Glyoxylate/hydroxypyruvate reductase B">
    <location>
        <begin position="1"/>
        <end position="324"/>
    </location>
</feature>
<feature type="active site" evidence="1">
    <location>
        <position position="237"/>
    </location>
</feature>
<feature type="active site" evidence="1">
    <location>
        <position position="266"/>
    </location>
</feature>
<feature type="active site" description="Proton donor" evidence="1">
    <location>
        <position position="285"/>
    </location>
</feature>
<accession>B5EX58</accession>
<protein>
    <recommendedName>
        <fullName evidence="1">Glyoxylate/hydroxypyruvate reductase B</fullName>
        <ecNumber evidence="1">1.1.1.79</ecNumber>
        <ecNumber evidence="1">1.1.1.81</ecNumber>
    </recommendedName>
</protein>
<gene>
    <name evidence="1" type="primary">ghrB</name>
    <name type="ordered locus">SeAg_B3860</name>
</gene>
<comment type="function">
    <text evidence="1">Catalyzes the NADPH-dependent reduction of glyoxylate and hydroxypyruvate into glycolate and glycerate, respectively.</text>
</comment>
<comment type="catalytic activity">
    <reaction evidence="1">
        <text>glycolate + NADP(+) = glyoxylate + NADPH + H(+)</text>
        <dbReference type="Rhea" id="RHEA:10992"/>
        <dbReference type="ChEBI" id="CHEBI:15378"/>
        <dbReference type="ChEBI" id="CHEBI:29805"/>
        <dbReference type="ChEBI" id="CHEBI:36655"/>
        <dbReference type="ChEBI" id="CHEBI:57783"/>
        <dbReference type="ChEBI" id="CHEBI:58349"/>
        <dbReference type="EC" id="1.1.1.79"/>
    </reaction>
</comment>
<comment type="catalytic activity">
    <reaction evidence="1">
        <text>(R)-glycerate + NAD(+) = 3-hydroxypyruvate + NADH + H(+)</text>
        <dbReference type="Rhea" id="RHEA:17905"/>
        <dbReference type="ChEBI" id="CHEBI:15378"/>
        <dbReference type="ChEBI" id="CHEBI:16659"/>
        <dbReference type="ChEBI" id="CHEBI:17180"/>
        <dbReference type="ChEBI" id="CHEBI:57540"/>
        <dbReference type="ChEBI" id="CHEBI:57945"/>
        <dbReference type="EC" id="1.1.1.81"/>
    </reaction>
</comment>
<comment type="catalytic activity">
    <reaction evidence="1">
        <text>(R)-glycerate + NADP(+) = 3-hydroxypyruvate + NADPH + H(+)</text>
        <dbReference type="Rhea" id="RHEA:18657"/>
        <dbReference type="ChEBI" id="CHEBI:15378"/>
        <dbReference type="ChEBI" id="CHEBI:16659"/>
        <dbReference type="ChEBI" id="CHEBI:17180"/>
        <dbReference type="ChEBI" id="CHEBI:57783"/>
        <dbReference type="ChEBI" id="CHEBI:58349"/>
        <dbReference type="EC" id="1.1.1.81"/>
    </reaction>
</comment>
<comment type="subunit">
    <text evidence="1">Homodimer.</text>
</comment>
<comment type="subcellular location">
    <subcellularLocation>
        <location evidence="1">Cytoplasm</location>
    </subcellularLocation>
</comment>
<comment type="similarity">
    <text evidence="1">Belongs to the D-isomer specific 2-hydroxyacid dehydrogenase family. GhrB subfamily.</text>
</comment>
<keyword id="KW-0963">Cytoplasm</keyword>
<keyword id="KW-0520">NAD</keyword>
<keyword id="KW-0521">NADP</keyword>
<keyword id="KW-0560">Oxidoreductase</keyword>
<proteinExistence type="inferred from homology"/>
<sequence>MKPSIILYKTLPDDLLHRLEAHFTVTQVPNLHPETVARHAQAFASAQGLLGASETVNRALLEKMPALRAASTISVGYDNVEVDALTARKIVLMHTPAVLTETVADTVMALMLTTARRVVDVAERVKAGEWTESIGPAWFGIDVHHKTLGIVGMGRIGMALAQRAHFGFTMPVLYHARRRHQEAEDRFNARYCDLDTLLQEADFVCVILPLTAETRHLFGATQFARMKSSAIFINAGRGPVVDENALIAALQNGEIYAAGLDVFEQEPLSVDSPLLNMSNVVAVPHIGSATHETRYNMMACAVDNLIDALQGKIEKNCVNPQAAG</sequence>
<dbReference type="EC" id="1.1.1.79" evidence="1"/>
<dbReference type="EC" id="1.1.1.81" evidence="1"/>
<dbReference type="EMBL" id="CP001138">
    <property type="protein sequence ID" value="ACH52851.1"/>
    <property type="molecule type" value="Genomic_DNA"/>
</dbReference>
<dbReference type="RefSeq" id="WP_000804680.1">
    <property type="nucleotide sequence ID" value="NC_011149.1"/>
</dbReference>
<dbReference type="SMR" id="B5EX58"/>
<dbReference type="KEGG" id="sea:SeAg_B3860"/>
<dbReference type="HOGENOM" id="CLU_019796_1_2_6"/>
<dbReference type="Proteomes" id="UP000008819">
    <property type="component" value="Chromosome"/>
</dbReference>
<dbReference type="GO" id="GO:0005829">
    <property type="term" value="C:cytosol"/>
    <property type="evidence" value="ECO:0007669"/>
    <property type="project" value="TreeGrafter"/>
</dbReference>
<dbReference type="GO" id="GO:0005886">
    <property type="term" value="C:plasma membrane"/>
    <property type="evidence" value="ECO:0007669"/>
    <property type="project" value="UniProtKB-UniRule"/>
</dbReference>
<dbReference type="GO" id="GO:0030267">
    <property type="term" value="F:glyoxylate reductase (NADPH) activity"/>
    <property type="evidence" value="ECO:0007669"/>
    <property type="project" value="UniProtKB-UniRule"/>
</dbReference>
<dbReference type="GO" id="GO:0008465">
    <property type="term" value="F:hydroxypyruvate reductase (NADH) activity"/>
    <property type="evidence" value="ECO:0007669"/>
    <property type="project" value="RHEA"/>
</dbReference>
<dbReference type="GO" id="GO:0120509">
    <property type="term" value="F:hydroxypyruvate reductase (NADPH) activity"/>
    <property type="evidence" value="ECO:0007669"/>
    <property type="project" value="RHEA"/>
</dbReference>
<dbReference type="GO" id="GO:0051287">
    <property type="term" value="F:NAD binding"/>
    <property type="evidence" value="ECO:0007669"/>
    <property type="project" value="InterPro"/>
</dbReference>
<dbReference type="CDD" id="cd05301">
    <property type="entry name" value="GDH"/>
    <property type="match status" value="1"/>
</dbReference>
<dbReference type="FunFam" id="3.40.50.720:FF:000026">
    <property type="entry name" value="Glyoxylate/hydroxypyruvate reductase B"/>
    <property type="match status" value="1"/>
</dbReference>
<dbReference type="Gene3D" id="3.40.50.720">
    <property type="entry name" value="NAD(P)-binding Rossmann-like Domain"/>
    <property type="match status" value="2"/>
</dbReference>
<dbReference type="HAMAP" id="MF_01667">
    <property type="entry name" value="2_Hacid_dh_C_GhrB"/>
    <property type="match status" value="1"/>
</dbReference>
<dbReference type="InterPro" id="IPR050223">
    <property type="entry name" value="D-isomer_2-hydroxyacid_DH"/>
</dbReference>
<dbReference type="InterPro" id="IPR006139">
    <property type="entry name" value="D-isomer_2_OHA_DH_cat_dom"/>
</dbReference>
<dbReference type="InterPro" id="IPR029753">
    <property type="entry name" value="D-isomer_DH_CS"/>
</dbReference>
<dbReference type="InterPro" id="IPR006140">
    <property type="entry name" value="D-isomer_DH_NAD-bd"/>
</dbReference>
<dbReference type="InterPro" id="IPR023756">
    <property type="entry name" value="Glyo/OHPyrv_Rdtase_B"/>
</dbReference>
<dbReference type="InterPro" id="IPR036291">
    <property type="entry name" value="NAD(P)-bd_dom_sf"/>
</dbReference>
<dbReference type="NCBIfam" id="NF011938">
    <property type="entry name" value="PRK15409.1"/>
    <property type="match status" value="1"/>
</dbReference>
<dbReference type="PANTHER" id="PTHR10996">
    <property type="entry name" value="2-HYDROXYACID DEHYDROGENASE-RELATED"/>
    <property type="match status" value="1"/>
</dbReference>
<dbReference type="PANTHER" id="PTHR10996:SF283">
    <property type="entry name" value="GLYOXYLATE_HYDROXYPYRUVATE REDUCTASE B"/>
    <property type="match status" value="1"/>
</dbReference>
<dbReference type="Pfam" id="PF00389">
    <property type="entry name" value="2-Hacid_dh"/>
    <property type="match status" value="1"/>
</dbReference>
<dbReference type="Pfam" id="PF02826">
    <property type="entry name" value="2-Hacid_dh_C"/>
    <property type="match status" value="1"/>
</dbReference>
<dbReference type="SUPFAM" id="SSF52283">
    <property type="entry name" value="Formate/glycerate dehydrogenase catalytic domain-like"/>
    <property type="match status" value="1"/>
</dbReference>
<dbReference type="SUPFAM" id="SSF51735">
    <property type="entry name" value="NAD(P)-binding Rossmann-fold domains"/>
    <property type="match status" value="1"/>
</dbReference>
<dbReference type="PROSITE" id="PS00670">
    <property type="entry name" value="D_2_HYDROXYACID_DH_2"/>
    <property type="match status" value="1"/>
</dbReference>
<dbReference type="PROSITE" id="PS00671">
    <property type="entry name" value="D_2_HYDROXYACID_DH_3"/>
    <property type="match status" value="1"/>
</dbReference>
<name>GHRB_SALA4</name>